<name>SPF45_MOUSE</name>
<organism>
    <name type="scientific">Mus musculus</name>
    <name type="common">Mouse</name>
    <dbReference type="NCBI Taxonomy" id="10090"/>
    <lineage>
        <taxon>Eukaryota</taxon>
        <taxon>Metazoa</taxon>
        <taxon>Chordata</taxon>
        <taxon>Craniata</taxon>
        <taxon>Vertebrata</taxon>
        <taxon>Euteleostomi</taxon>
        <taxon>Mammalia</taxon>
        <taxon>Eutheria</taxon>
        <taxon>Euarchontoglires</taxon>
        <taxon>Glires</taxon>
        <taxon>Rodentia</taxon>
        <taxon>Myomorpha</taxon>
        <taxon>Muroidea</taxon>
        <taxon>Muridae</taxon>
        <taxon>Murinae</taxon>
        <taxon>Mus</taxon>
        <taxon>Mus</taxon>
    </lineage>
</organism>
<protein>
    <recommendedName>
        <fullName>Splicing factor 45</fullName>
    </recommendedName>
    <alternativeName>
        <fullName>45 kDa-splicing factor</fullName>
    </alternativeName>
    <alternativeName>
        <fullName>RNA-binding motif protein 17</fullName>
    </alternativeName>
</protein>
<sequence length="405" mass="45304">MSLYDDLGVETSDSKTEGWSKNFKLLQSQLQVKKAALTQAKSQRTKQSTVLAPVIDLKRGGSSDDRQIADTPPHVAAGLKDPVPSGFSAGEVLIPLADEYDPMFPNDYEKVVKRQREERQRQRELERQKEIEEREKRRKDRHEASGFSRRPDPDSDEDEDYERERRKRSMGGAAIAPPTSLVEKDKELPRDFPYEEDSRPRSQSSKAAIPPPVYEEPDRPRSPTGPSNSFLANMGGTVAHKIMQKYGFREGQGLGKHEQGLSTALSVEKTSKRGGKIIVGDATEKGEAQDASKKSDSNPLTEILKCPTKVVLLRNMVGAGEVDEDLEVETKEECEKYGKVGKCVIFEIPGAPDDEAVRIFLEFERVESAIKAVVDLNGRYFGGRVVKACFYNLDKFRVLDLAEQV</sequence>
<dbReference type="EMBL" id="AF083384">
    <property type="protein sequence ID" value="AAC64085.1"/>
    <property type="molecule type" value="mRNA"/>
</dbReference>
<dbReference type="EMBL" id="AL831794">
    <property type="status" value="NOT_ANNOTATED_CDS"/>
    <property type="molecule type" value="Genomic_DNA"/>
</dbReference>
<dbReference type="EMBL" id="BC034896">
    <property type="protein sequence ID" value="AAH34896.1"/>
    <property type="molecule type" value="mRNA"/>
</dbReference>
<dbReference type="CCDS" id="CCDS15684.1"/>
<dbReference type="RefSeq" id="NP_690037.1">
    <property type="nucleotide sequence ID" value="NM_152824.2"/>
</dbReference>
<dbReference type="BMRB" id="Q8JZX4"/>
<dbReference type="SMR" id="Q8JZX4"/>
<dbReference type="BioGRID" id="218413">
    <property type="interactions" value="4"/>
</dbReference>
<dbReference type="DIP" id="DIP-60651N"/>
<dbReference type="FunCoup" id="Q8JZX4">
    <property type="interactions" value="4003"/>
</dbReference>
<dbReference type="IntAct" id="Q8JZX4">
    <property type="interactions" value="2"/>
</dbReference>
<dbReference type="STRING" id="10090.ENSMUSP00000041831"/>
<dbReference type="iPTMnet" id="Q8JZX4"/>
<dbReference type="PhosphoSitePlus" id="Q8JZX4"/>
<dbReference type="SwissPalm" id="Q8JZX4"/>
<dbReference type="jPOST" id="Q8JZX4"/>
<dbReference type="PaxDb" id="10090-ENSMUSP00000041831"/>
<dbReference type="PeptideAtlas" id="Q8JZX4"/>
<dbReference type="ProteomicsDB" id="261133"/>
<dbReference type="Pumba" id="Q8JZX4"/>
<dbReference type="ABCD" id="Q8JZX4">
    <property type="antibodies" value="1 sequenced antibody"/>
</dbReference>
<dbReference type="Antibodypedia" id="43907">
    <property type="antibodies" value="122 antibodies from 25 providers"/>
</dbReference>
<dbReference type="DNASU" id="76938"/>
<dbReference type="Ensembl" id="ENSMUST00000040314.12">
    <property type="protein sequence ID" value="ENSMUSP00000041831.6"/>
    <property type="gene ID" value="ENSMUSG00000037197.12"/>
</dbReference>
<dbReference type="GeneID" id="76938"/>
<dbReference type="KEGG" id="mmu:76938"/>
<dbReference type="UCSC" id="uc008iio.1">
    <property type="organism name" value="mouse"/>
</dbReference>
<dbReference type="AGR" id="MGI:1924188"/>
<dbReference type="CTD" id="84991"/>
<dbReference type="MGI" id="MGI:1924188">
    <property type="gene designation" value="Rbm17"/>
</dbReference>
<dbReference type="VEuPathDB" id="HostDB:ENSMUSG00000037197"/>
<dbReference type="eggNOG" id="KOG1996">
    <property type="taxonomic scope" value="Eukaryota"/>
</dbReference>
<dbReference type="GeneTree" id="ENSGT00790000123099"/>
<dbReference type="HOGENOM" id="CLU_044888_0_0_1"/>
<dbReference type="InParanoid" id="Q8JZX4"/>
<dbReference type="OMA" id="HACFYDE"/>
<dbReference type="OrthoDB" id="5411533at2759"/>
<dbReference type="PhylomeDB" id="Q8JZX4"/>
<dbReference type="TreeFam" id="TF313987"/>
<dbReference type="Reactome" id="R-MMU-72163">
    <property type="pathway name" value="mRNA Splicing - Major Pathway"/>
</dbReference>
<dbReference type="BioGRID-ORCS" id="76938">
    <property type="hits" value="23 hits in 115 CRISPR screens"/>
</dbReference>
<dbReference type="ChiTaRS" id="Rbm17">
    <property type="organism name" value="mouse"/>
</dbReference>
<dbReference type="PRO" id="PR:Q8JZX4"/>
<dbReference type="Proteomes" id="UP000000589">
    <property type="component" value="Chromosome 2"/>
</dbReference>
<dbReference type="RNAct" id="Q8JZX4">
    <property type="molecule type" value="protein"/>
</dbReference>
<dbReference type="Bgee" id="ENSMUSG00000037197">
    <property type="expression patterns" value="Expressed in embryonic post-anal tail and 266 other cell types or tissues"/>
</dbReference>
<dbReference type="ExpressionAtlas" id="Q8JZX4">
    <property type="expression patterns" value="baseline and differential"/>
</dbReference>
<dbReference type="GO" id="GO:0005654">
    <property type="term" value="C:nucleoplasm"/>
    <property type="evidence" value="ECO:0007669"/>
    <property type="project" value="Ensembl"/>
</dbReference>
<dbReference type="GO" id="GO:0005634">
    <property type="term" value="C:nucleus"/>
    <property type="evidence" value="ECO:0000314"/>
    <property type="project" value="MGI"/>
</dbReference>
<dbReference type="GO" id="GO:0032991">
    <property type="term" value="C:protein-containing complex"/>
    <property type="evidence" value="ECO:0000314"/>
    <property type="project" value="MGI"/>
</dbReference>
<dbReference type="GO" id="GO:0005681">
    <property type="term" value="C:spliceosomal complex"/>
    <property type="evidence" value="ECO:0007669"/>
    <property type="project" value="UniProtKB-KW"/>
</dbReference>
<dbReference type="GO" id="GO:0003723">
    <property type="term" value="F:RNA binding"/>
    <property type="evidence" value="ECO:0007669"/>
    <property type="project" value="UniProtKB-KW"/>
</dbReference>
<dbReference type="GO" id="GO:0000380">
    <property type="term" value="P:alternative mRNA splicing, via spliceosome"/>
    <property type="evidence" value="ECO:0000250"/>
    <property type="project" value="UniProtKB"/>
</dbReference>
<dbReference type="GO" id="GO:0045292">
    <property type="term" value="P:mRNA cis splicing, via spliceosome"/>
    <property type="evidence" value="ECO:0007669"/>
    <property type="project" value="InterPro"/>
</dbReference>
<dbReference type="GO" id="GO:0000375">
    <property type="term" value="P:RNA splicing, via transesterification reactions"/>
    <property type="evidence" value="ECO:0000304"/>
    <property type="project" value="UniProtKB"/>
</dbReference>
<dbReference type="CDD" id="cd12647">
    <property type="entry name" value="RRM_UHM_SPF45"/>
    <property type="match status" value="1"/>
</dbReference>
<dbReference type="FunFam" id="3.30.70.330:FF:000079">
    <property type="entry name" value="Putative splicing factor 45"/>
    <property type="match status" value="1"/>
</dbReference>
<dbReference type="Gene3D" id="3.30.70.330">
    <property type="match status" value="1"/>
</dbReference>
<dbReference type="InterPro" id="IPR000467">
    <property type="entry name" value="G_patch_dom"/>
</dbReference>
<dbReference type="InterPro" id="IPR012677">
    <property type="entry name" value="Nucleotide-bd_a/b_plait_sf"/>
</dbReference>
<dbReference type="InterPro" id="IPR035979">
    <property type="entry name" value="RBD_domain_sf"/>
</dbReference>
<dbReference type="InterPro" id="IPR040052">
    <property type="entry name" value="RBM17"/>
</dbReference>
<dbReference type="InterPro" id="IPR000504">
    <property type="entry name" value="RRM_dom"/>
</dbReference>
<dbReference type="InterPro" id="IPR003954">
    <property type="entry name" value="RRM_dom_euk"/>
</dbReference>
<dbReference type="InterPro" id="IPR034653">
    <property type="entry name" value="SPF45_RRM"/>
</dbReference>
<dbReference type="PANTHER" id="PTHR13288:SF8">
    <property type="entry name" value="SPLICING FACTOR 45"/>
    <property type="match status" value="1"/>
</dbReference>
<dbReference type="PANTHER" id="PTHR13288">
    <property type="entry name" value="SPLICING FACTOR 45 SPF45"/>
    <property type="match status" value="1"/>
</dbReference>
<dbReference type="Pfam" id="PF01585">
    <property type="entry name" value="G-patch"/>
    <property type="match status" value="1"/>
</dbReference>
<dbReference type="Pfam" id="PF00076">
    <property type="entry name" value="RRM_1"/>
    <property type="match status" value="1"/>
</dbReference>
<dbReference type="PIRSF" id="PIRSF031066">
    <property type="entry name" value="Splicing_factor_SPF45"/>
    <property type="match status" value="1"/>
</dbReference>
<dbReference type="SMART" id="SM00443">
    <property type="entry name" value="G_patch"/>
    <property type="match status" value="1"/>
</dbReference>
<dbReference type="SMART" id="SM00361">
    <property type="entry name" value="RRM_1"/>
    <property type="match status" value="1"/>
</dbReference>
<dbReference type="SUPFAM" id="SSF54928">
    <property type="entry name" value="RNA-binding domain, RBD"/>
    <property type="match status" value="1"/>
</dbReference>
<dbReference type="PROSITE" id="PS50174">
    <property type="entry name" value="G_PATCH"/>
    <property type="match status" value="1"/>
</dbReference>
<proteinExistence type="evidence at protein level"/>
<feature type="initiator methionine" description="Removed" evidence="2">
    <location>
        <position position="1"/>
    </location>
</feature>
<feature type="chain" id="PRO_0000081904" description="Splicing factor 45">
    <location>
        <begin position="2"/>
        <end position="405"/>
    </location>
</feature>
<feature type="domain" description="G-patch" evidence="3">
    <location>
        <begin position="235"/>
        <end position="283"/>
    </location>
</feature>
<feature type="domain" description="RRM">
    <location>
        <begin position="310"/>
        <end position="389"/>
    </location>
</feature>
<feature type="region of interest" description="Disordered" evidence="4">
    <location>
        <begin position="57"/>
        <end position="88"/>
    </location>
</feature>
<feature type="region of interest" description="Disordered" evidence="4">
    <location>
        <begin position="114"/>
        <end position="233"/>
    </location>
</feature>
<feature type="compositionally biased region" description="Basic and acidic residues" evidence="4">
    <location>
        <begin position="57"/>
        <end position="68"/>
    </location>
</feature>
<feature type="compositionally biased region" description="Basic and acidic residues" evidence="4">
    <location>
        <begin position="114"/>
        <end position="153"/>
    </location>
</feature>
<feature type="compositionally biased region" description="Basic and acidic residues" evidence="4">
    <location>
        <begin position="182"/>
        <end position="200"/>
    </location>
</feature>
<feature type="modified residue" description="N-acetylserine" evidence="2">
    <location>
        <position position="2"/>
    </location>
</feature>
<feature type="modified residue" description="Phosphoserine" evidence="2">
    <location>
        <position position="2"/>
    </location>
</feature>
<feature type="modified residue" description="N6-acetyllysine" evidence="2">
    <location>
        <position position="21"/>
    </location>
</feature>
<feature type="modified residue" description="N6-acetyllysine; alternate" evidence="8">
    <location>
        <position position="41"/>
    </location>
</feature>
<feature type="modified residue" description="Phosphothreonine" evidence="2">
    <location>
        <position position="71"/>
    </location>
</feature>
<feature type="modified residue" description="Phosphoserine" evidence="5 6 7">
    <location>
        <position position="155"/>
    </location>
</feature>
<feature type="modified residue" description="Phosphoserine" evidence="2">
    <location>
        <position position="169"/>
    </location>
</feature>
<feature type="modified residue" description="Phosphoserine" evidence="2">
    <location>
        <position position="222"/>
    </location>
</feature>
<feature type="modified residue" description="Phosphothreonine" evidence="2">
    <location>
        <position position="237"/>
    </location>
</feature>
<feature type="modified residue" description="Phosphoserine" evidence="2">
    <location>
        <position position="266"/>
    </location>
</feature>
<feature type="modified residue" description="Phosphoserine" evidence="2">
    <location>
        <position position="295"/>
    </location>
</feature>
<feature type="modified residue" description="Phosphoserine" evidence="2">
    <location>
        <position position="297"/>
    </location>
</feature>
<feature type="cross-link" description="Glycyl lysine isopeptide (Lys-Gly) (interchain with G-Cter in SUMO2)" evidence="2">
    <location>
        <position position="15"/>
    </location>
</feature>
<feature type="cross-link" description="Glycyl lysine isopeptide (Lys-Gly) (interchain with G-Cter in SUMO2)" evidence="2">
    <location>
        <position position="24"/>
    </location>
</feature>
<feature type="cross-link" description="Glycyl lysine isopeptide (Lys-Gly) (interchain with G-Cter in SUMO2)" evidence="2">
    <location>
        <position position="33"/>
    </location>
</feature>
<feature type="cross-link" description="Glycyl lysine isopeptide (Lys-Gly) (interchain with G-Cter in SUMO2); alternate" evidence="2">
    <location>
        <position position="41"/>
    </location>
</feature>
<feature type="cross-link" description="Glycyl lysine isopeptide (Lys-Gly) (interchain with G-Cter in SUMO2)" evidence="2">
    <location>
        <position position="58"/>
    </location>
</feature>
<feature type="cross-link" description="Glycyl lysine isopeptide (Lys-Gly) (interchain with G-Cter in SUMO2)" evidence="2">
    <location>
        <position position="256"/>
    </location>
</feature>
<feature type="cross-link" description="Glycyl lysine isopeptide (Lys-Gly) (interchain with G-Cter in SUMO2)" evidence="2">
    <location>
        <position position="276"/>
    </location>
</feature>
<gene>
    <name type="primary">Rbm17</name>
    <name type="synonym">Spf45</name>
</gene>
<comment type="function">
    <text evidence="1">Splice factor that binds to the single-stranded 3'AG at the exon/intron border and promotes its utilization in the second catalytic step. Involved in the regulation of alternative splicing and the utilization of cryptic splice sites (By similarity).</text>
</comment>
<comment type="subunit">
    <text evidence="1">Binds SXL. Associates with the spliceosome. Interacts with SF3B1, SF1 and U2AF2 (By similarity).</text>
</comment>
<comment type="subcellular location">
    <subcellularLocation>
        <location evidence="1">Nucleus</location>
    </subcellularLocation>
</comment>
<reference key="1">
    <citation type="journal article" date="1998" name="Nat. Genet.">
        <title>Mass spectrometry and EST-database searching allows characterization of the multi-protein spliceosome complex.</title>
        <authorList>
            <person name="Neubauer G."/>
            <person name="King A."/>
            <person name="Rappsilber J."/>
            <person name="Calvio C."/>
            <person name="Watson M."/>
            <person name="Ajuh P."/>
            <person name="Sleeman J."/>
            <person name="Lamond A.I."/>
            <person name="Mann M."/>
        </authorList>
    </citation>
    <scope>NUCLEOTIDE SEQUENCE [MRNA]</scope>
</reference>
<reference key="2">
    <citation type="journal article" date="2009" name="PLoS Biol.">
        <title>Lineage-specific biology revealed by a finished genome assembly of the mouse.</title>
        <authorList>
            <person name="Church D.M."/>
            <person name="Goodstadt L."/>
            <person name="Hillier L.W."/>
            <person name="Zody M.C."/>
            <person name="Goldstein S."/>
            <person name="She X."/>
            <person name="Bult C.J."/>
            <person name="Agarwala R."/>
            <person name="Cherry J.L."/>
            <person name="DiCuccio M."/>
            <person name="Hlavina W."/>
            <person name="Kapustin Y."/>
            <person name="Meric P."/>
            <person name="Maglott D."/>
            <person name="Birtle Z."/>
            <person name="Marques A.C."/>
            <person name="Graves T."/>
            <person name="Zhou S."/>
            <person name="Teague B."/>
            <person name="Potamousis K."/>
            <person name="Churas C."/>
            <person name="Place M."/>
            <person name="Herschleb J."/>
            <person name="Runnheim R."/>
            <person name="Forrest D."/>
            <person name="Amos-Landgraf J."/>
            <person name="Schwartz D.C."/>
            <person name="Cheng Z."/>
            <person name="Lindblad-Toh K."/>
            <person name="Eichler E.E."/>
            <person name="Ponting C.P."/>
        </authorList>
    </citation>
    <scope>NUCLEOTIDE SEQUENCE [LARGE SCALE GENOMIC DNA]</scope>
    <source>
        <strain>C57BL/6J</strain>
    </source>
</reference>
<reference key="3">
    <citation type="journal article" date="2004" name="Genome Res.">
        <title>The status, quality, and expansion of the NIH full-length cDNA project: the Mammalian Gene Collection (MGC).</title>
        <authorList>
            <consortium name="The MGC Project Team"/>
        </authorList>
    </citation>
    <scope>NUCLEOTIDE SEQUENCE [LARGE SCALE MRNA]</scope>
    <source>
        <tissue>Thymus</tissue>
    </source>
</reference>
<reference key="4">
    <citation type="journal article" date="2007" name="Proc. Natl. Acad. Sci. U.S.A.">
        <title>Large-scale phosphorylation analysis of mouse liver.</title>
        <authorList>
            <person name="Villen J."/>
            <person name="Beausoleil S.A."/>
            <person name="Gerber S.A."/>
            <person name="Gygi S.P."/>
        </authorList>
    </citation>
    <scope>PHOSPHORYLATION [LARGE SCALE ANALYSIS] AT SER-155</scope>
    <scope>IDENTIFICATION BY MASS SPECTROMETRY [LARGE SCALE ANALYSIS]</scope>
    <source>
        <tissue>Liver</tissue>
    </source>
</reference>
<reference key="5">
    <citation type="journal article" date="2009" name="Immunity">
        <title>The phagosomal proteome in interferon-gamma-activated macrophages.</title>
        <authorList>
            <person name="Trost M."/>
            <person name="English L."/>
            <person name="Lemieux S."/>
            <person name="Courcelles M."/>
            <person name="Desjardins M."/>
            <person name="Thibault P."/>
        </authorList>
    </citation>
    <scope>PHOSPHORYLATION [LARGE SCALE ANALYSIS] AT SER-155</scope>
    <scope>IDENTIFICATION BY MASS SPECTROMETRY [LARGE SCALE ANALYSIS]</scope>
</reference>
<reference key="6">
    <citation type="journal article" date="2010" name="Cell">
        <title>A tissue-specific atlas of mouse protein phosphorylation and expression.</title>
        <authorList>
            <person name="Huttlin E.L."/>
            <person name="Jedrychowski M.P."/>
            <person name="Elias J.E."/>
            <person name="Goswami T."/>
            <person name="Rad R."/>
            <person name="Beausoleil S.A."/>
            <person name="Villen J."/>
            <person name="Haas W."/>
            <person name="Sowa M.E."/>
            <person name="Gygi S.P."/>
        </authorList>
    </citation>
    <scope>PHOSPHORYLATION [LARGE SCALE ANALYSIS] AT SER-155</scope>
    <scope>IDENTIFICATION BY MASS SPECTROMETRY [LARGE SCALE ANALYSIS]</scope>
    <source>
        <tissue>Brain</tissue>
        <tissue>Kidney</tissue>
        <tissue>Liver</tissue>
        <tissue>Lung</tissue>
        <tissue>Pancreas</tissue>
        <tissue>Spleen</tissue>
        <tissue>Testis</tissue>
    </source>
</reference>
<reference key="7">
    <citation type="journal article" date="2013" name="Mol. Cell">
        <title>SIRT5-mediated lysine desuccinylation impacts diverse metabolic pathways.</title>
        <authorList>
            <person name="Park J."/>
            <person name="Chen Y."/>
            <person name="Tishkoff D.X."/>
            <person name="Peng C."/>
            <person name="Tan M."/>
            <person name="Dai L."/>
            <person name="Xie Z."/>
            <person name="Zhang Y."/>
            <person name="Zwaans B.M."/>
            <person name="Skinner M.E."/>
            <person name="Lombard D.B."/>
            <person name="Zhao Y."/>
        </authorList>
    </citation>
    <scope>ACETYLATION [LARGE SCALE ANALYSIS] AT LYS-41</scope>
    <scope>IDENTIFICATION BY MASS SPECTROMETRY [LARGE SCALE ANALYSIS]</scope>
    <source>
        <tissue>Embryonic fibroblast</tissue>
    </source>
</reference>
<evidence type="ECO:0000250" key="1"/>
<evidence type="ECO:0000250" key="2">
    <source>
        <dbReference type="UniProtKB" id="Q96I25"/>
    </source>
</evidence>
<evidence type="ECO:0000255" key="3">
    <source>
        <dbReference type="PROSITE-ProRule" id="PRU00092"/>
    </source>
</evidence>
<evidence type="ECO:0000256" key="4">
    <source>
        <dbReference type="SAM" id="MobiDB-lite"/>
    </source>
</evidence>
<evidence type="ECO:0007744" key="5">
    <source>
    </source>
</evidence>
<evidence type="ECO:0007744" key="6">
    <source>
    </source>
</evidence>
<evidence type="ECO:0007744" key="7">
    <source>
    </source>
</evidence>
<evidence type="ECO:0007744" key="8">
    <source>
    </source>
</evidence>
<accession>Q8JZX4</accession>
<accession>A2AP41</accession>
<accession>O75939</accession>
<keyword id="KW-0007">Acetylation</keyword>
<keyword id="KW-1017">Isopeptide bond</keyword>
<keyword id="KW-0507">mRNA processing</keyword>
<keyword id="KW-0508">mRNA splicing</keyword>
<keyword id="KW-0539">Nucleus</keyword>
<keyword id="KW-0597">Phosphoprotein</keyword>
<keyword id="KW-1185">Reference proteome</keyword>
<keyword id="KW-0694">RNA-binding</keyword>
<keyword id="KW-0747">Spliceosome</keyword>
<keyword id="KW-0832">Ubl conjugation</keyword>